<gene>
    <name evidence="1" type="primary">psbC</name>
</gene>
<keyword id="KW-0007">Acetylation</keyword>
<keyword id="KW-0148">Chlorophyll</keyword>
<keyword id="KW-0150">Chloroplast</keyword>
<keyword id="KW-0157">Chromophore</keyword>
<keyword id="KW-0464">Manganese</keyword>
<keyword id="KW-0472">Membrane</keyword>
<keyword id="KW-0479">Metal-binding</keyword>
<keyword id="KW-0597">Phosphoprotein</keyword>
<keyword id="KW-0602">Photosynthesis</keyword>
<keyword id="KW-0604">Photosystem II</keyword>
<keyword id="KW-0934">Plastid</keyword>
<keyword id="KW-0793">Thylakoid</keyword>
<keyword id="KW-0812">Transmembrane</keyword>
<keyword id="KW-1133">Transmembrane helix</keyword>
<geneLocation type="chloroplast"/>
<evidence type="ECO:0000255" key="1">
    <source>
        <dbReference type="HAMAP-Rule" id="MF_01496"/>
    </source>
</evidence>
<sequence length="461" mass="50343">METLFNGTLALTGRDQETTGFAWWAGNARLINLSGKLLGAHVAHAGLIVFWAGAMNLFEVAHFVPEKPMYEQGLILLPHLATLGWGVGPGGEVIDTFPYFVSGVLHLISSAVLGFGGIYHALLGPETLEESFPFFGYVWKDRNKMTTILGIHLILLGIGAFLLVFKASYFGGIYDTWAPGGGDVRKITNLTLSPSIIFGYLLKSPFGGEGWIVSVDDLEDIIGGHVWLGSICILGGIWHILTKPFAWARRALVWSGEAYLSYSLAALSVFGFIACCFVWFNNTAYPSEFYGPTGPEASQAQAFTFLVRDQRLGANVGSAQGPTGLGKYLMRSPTGEVIFGGETMRFWDLRAPWLEPLRGPNGLDLSRLKKDIQPWQERRSAEYMTHAPLGSLNSVGGVATEINAVNYVSPRSWLATSHFVLGFFLFVGHLWHAGRARAAAAGFEKGIDRDFEPVLSMTPLN</sequence>
<feature type="propeptide" id="PRO_0000431163" evidence="1">
    <location>
        <begin position="1"/>
        <end position="2"/>
    </location>
</feature>
<feature type="chain" id="PRO_0000077517" description="Photosystem II CP43 reaction center protein" evidence="1">
    <location>
        <begin position="3"/>
        <end position="461"/>
    </location>
</feature>
<feature type="transmembrane region" description="Helical" evidence="1">
    <location>
        <begin position="57"/>
        <end position="81"/>
    </location>
</feature>
<feature type="transmembrane region" description="Helical" evidence="1">
    <location>
        <begin position="122"/>
        <end position="143"/>
    </location>
</feature>
<feature type="transmembrane region" description="Helical" evidence="1">
    <location>
        <begin position="166"/>
        <end position="188"/>
    </location>
</feature>
<feature type="transmembrane region" description="Helical" evidence="1">
    <location>
        <begin position="243"/>
        <end position="263"/>
    </location>
</feature>
<feature type="transmembrane region" description="Helical" evidence="1">
    <location>
        <begin position="279"/>
        <end position="300"/>
    </location>
</feature>
<feature type="transmembrane region" description="Helical" evidence="1">
    <location>
        <begin position="435"/>
        <end position="459"/>
    </location>
</feature>
<feature type="binding site" evidence="1">
    <location>
        <position position="355"/>
    </location>
    <ligand>
        <name>[CaMn4O5] cluster</name>
        <dbReference type="ChEBI" id="CHEBI:189552"/>
    </ligand>
</feature>
<feature type="modified residue" description="N-acetylthreonine" evidence="1">
    <location>
        <position position="3"/>
    </location>
</feature>
<feature type="modified residue" description="Phosphothreonine" evidence="1">
    <location>
        <position position="3"/>
    </location>
</feature>
<reference key="1">
    <citation type="journal article" date="2000" name="DNA Res.">
        <title>Complete structure of the chloroplast genome of a legume, Lotus japonicus.</title>
        <authorList>
            <person name="Kato T."/>
            <person name="Kaneko T."/>
            <person name="Sato S."/>
            <person name="Nakamura Y."/>
            <person name="Tabata S."/>
        </authorList>
    </citation>
    <scope>NUCLEOTIDE SEQUENCE [LARGE SCALE GENOMIC DNA]</scope>
    <source>
        <strain>cv. Miyakojima MG-20</strain>
    </source>
</reference>
<reference key="2">
    <citation type="submission" date="2007-12" db="EMBL/GenBank/DDBJ databases">
        <authorList>
            <person name="Kato T."/>
        </authorList>
    </citation>
    <scope>SEQUENCE REVISION TO N-TERMINUS</scope>
</reference>
<protein>
    <recommendedName>
        <fullName evidence="1">Photosystem II CP43 reaction center protein</fullName>
    </recommendedName>
    <alternativeName>
        <fullName evidence="1">PSII 43 kDa protein</fullName>
    </alternativeName>
    <alternativeName>
        <fullName evidence="1">Protein CP-43</fullName>
    </alternativeName>
</protein>
<comment type="function">
    <text evidence="1">One of the components of the core complex of photosystem II (PSII). It binds chlorophyll and helps catalyze the primary light-induced photochemical processes of PSII. PSII is a light-driven water:plastoquinone oxidoreductase, using light energy to abstract electrons from H(2)O, generating O(2) and a proton gradient subsequently used for ATP formation.</text>
</comment>
<comment type="cofactor">
    <text evidence="1">Binds multiple chlorophylls and provides some of the ligands for the Ca-4Mn-5O cluster of the oxygen-evolving complex. It may also provide a ligand for a Cl- that is required for oxygen evolution. PSII binds additional chlorophylls, carotenoids and specific lipids.</text>
</comment>
<comment type="subunit">
    <text evidence="1">PSII is composed of 1 copy each of membrane proteins PsbA, PsbB, PsbC, PsbD, PsbE, PsbF, PsbH, PsbI, PsbJ, PsbK, PsbL, PsbM, PsbT, PsbX, PsbY, PsbZ, Psb30/Ycf12, at least 3 peripheral proteins of the oxygen-evolving complex and a large number of cofactors. It forms dimeric complexes.</text>
</comment>
<comment type="subcellular location">
    <subcellularLocation>
        <location evidence="1">Plastid</location>
        <location evidence="1">Chloroplast thylakoid membrane</location>
        <topology evidence="1">Multi-pass membrane protein</topology>
    </subcellularLocation>
</comment>
<comment type="similarity">
    <text evidence="1">Belongs to the PsbB/PsbC family. PsbC subfamily.</text>
</comment>
<dbReference type="EMBL" id="AP002983">
    <property type="protein sequence ID" value="BAB33190.2"/>
    <property type="molecule type" value="Genomic_DNA"/>
</dbReference>
<dbReference type="RefSeq" id="NP_084792.1">
    <property type="nucleotide sequence ID" value="NC_002694.1"/>
</dbReference>
<dbReference type="SMR" id="Q9BBT1"/>
<dbReference type="ProMEX" id="Q9BBT1"/>
<dbReference type="GeneID" id="802890"/>
<dbReference type="GO" id="GO:0009535">
    <property type="term" value="C:chloroplast thylakoid membrane"/>
    <property type="evidence" value="ECO:0007669"/>
    <property type="project" value="UniProtKB-SubCell"/>
</dbReference>
<dbReference type="GO" id="GO:0009523">
    <property type="term" value="C:photosystem II"/>
    <property type="evidence" value="ECO:0007669"/>
    <property type="project" value="UniProtKB-KW"/>
</dbReference>
<dbReference type="GO" id="GO:0016168">
    <property type="term" value="F:chlorophyll binding"/>
    <property type="evidence" value="ECO:0007669"/>
    <property type="project" value="UniProtKB-UniRule"/>
</dbReference>
<dbReference type="GO" id="GO:0045156">
    <property type="term" value="F:electron transporter, transferring electrons within the cyclic electron transport pathway of photosynthesis activity"/>
    <property type="evidence" value="ECO:0007669"/>
    <property type="project" value="InterPro"/>
</dbReference>
<dbReference type="GO" id="GO:0046872">
    <property type="term" value="F:metal ion binding"/>
    <property type="evidence" value="ECO:0007669"/>
    <property type="project" value="UniProtKB-KW"/>
</dbReference>
<dbReference type="GO" id="GO:0009772">
    <property type="term" value="P:photosynthetic electron transport in photosystem II"/>
    <property type="evidence" value="ECO:0007669"/>
    <property type="project" value="InterPro"/>
</dbReference>
<dbReference type="FunFam" id="1.10.10.670:FF:000001">
    <property type="entry name" value="Photosystem II CP43 reaction center protein"/>
    <property type="match status" value="1"/>
</dbReference>
<dbReference type="Gene3D" id="1.10.10.670">
    <property type="entry name" value="photosystem ii from thermosynechococcus elongatus"/>
    <property type="match status" value="1"/>
</dbReference>
<dbReference type="HAMAP" id="MF_01496">
    <property type="entry name" value="PSII_PsbC_CP43"/>
    <property type="match status" value="1"/>
</dbReference>
<dbReference type="InterPro" id="IPR000932">
    <property type="entry name" value="PS_antenna-like"/>
</dbReference>
<dbReference type="InterPro" id="IPR036001">
    <property type="entry name" value="PS_II_antenna-like_sf"/>
</dbReference>
<dbReference type="InterPro" id="IPR005869">
    <property type="entry name" value="PSII_PsbC"/>
</dbReference>
<dbReference type="InterPro" id="IPR044900">
    <property type="entry name" value="PSII_PsbC_sf"/>
</dbReference>
<dbReference type="NCBIfam" id="TIGR01153">
    <property type="entry name" value="psbC"/>
    <property type="match status" value="1"/>
</dbReference>
<dbReference type="Pfam" id="PF00421">
    <property type="entry name" value="PSII"/>
    <property type="match status" value="1"/>
</dbReference>
<dbReference type="SUPFAM" id="SSF161077">
    <property type="entry name" value="Photosystem II antenna protein-like"/>
    <property type="match status" value="1"/>
</dbReference>
<organism>
    <name type="scientific">Lotus japonicus</name>
    <name type="common">Lotus corniculatus var. japonicus</name>
    <dbReference type="NCBI Taxonomy" id="34305"/>
    <lineage>
        <taxon>Eukaryota</taxon>
        <taxon>Viridiplantae</taxon>
        <taxon>Streptophyta</taxon>
        <taxon>Embryophyta</taxon>
        <taxon>Tracheophyta</taxon>
        <taxon>Spermatophyta</taxon>
        <taxon>Magnoliopsida</taxon>
        <taxon>eudicotyledons</taxon>
        <taxon>Gunneridae</taxon>
        <taxon>Pentapetalae</taxon>
        <taxon>rosids</taxon>
        <taxon>fabids</taxon>
        <taxon>Fabales</taxon>
        <taxon>Fabaceae</taxon>
        <taxon>Papilionoideae</taxon>
        <taxon>50 kb inversion clade</taxon>
        <taxon>NPAAA clade</taxon>
        <taxon>Hologalegina</taxon>
        <taxon>robinioid clade</taxon>
        <taxon>Loteae</taxon>
        <taxon>Lotus</taxon>
    </lineage>
</organism>
<name>PSBC_LOTJA</name>
<accession>Q9BBT1</accession>
<proteinExistence type="inferred from homology"/>